<keyword id="KW-0687">Ribonucleoprotein</keyword>
<keyword id="KW-0689">Ribosomal protein</keyword>
<keyword id="KW-0694">RNA-binding</keyword>
<keyword id="KW-0699">rRNA-binding</keyword>
<sequence>MSRIGKRIIEIPSSVQASVEGSKLLFKNSKEKHELETHNRVKITLENNQLSFQPVGEDAQSRAYWGTYGALANNIVIGLSTGFSKTLEVNGVGYKVALGNKTLDLSLGFSHPVKYPIPAGIEMVVEKNTITIKGSDKQKVGQVAAEIRSFRPPEPYKGKGVKYSNEVIIRKAGKTAKK</sequence>
<name>RL6_HELP2</name>
<dbReference type="EMBL" id="CP001217">
    <property type="protein sequence ID" value="ACJ08421.1"/>
    <property type="molecule type" value="Genomic_DNA"/>
</dbReference>
<dbReference type="SMR" id="B6JNE3"/>
<dbReference type="KEGG" id="hpp:HPP12_1269"/>
<dbReference type="HOGENOM" id="CLU_065464_1_2_7"/>
<dbReference type="Proteomes" id="UP000008198">
    <property type="component" value="Chromosome"/>
</dbReference>
<dbReference type="GO" id="GO:0022625">
    <property type="term" value="C:cytosolic large ribosomal subunit"/>
    <property type="evidence" value="ECO:0007669"/>
    <property type="project" value="TreeGrafter"/>
</dbReference>
<dbReference type="GO" id="GO:0019843">
    <property type="term" value="F:rRNA binding"/>
    <property type="evidence" value="ECO:0007669"/>
    <property type="project" value="UniProtKB-UniRule"/>
</dbReference>
<dbReference type="GO" id="GO:0003735">
    <property type="term" value="F:structural constituent of ribosome"/>
    <property type="evidence" value="ECO:0007669"/>
    <property type="project" value="InterPro"/>
</dbReference>
<dbReference type="GO" id="GO:0002181">
    <property type="term" value="P:cytoplasmic translation"/>
    <property type="evidence" value="ECO:0007669"/>
    <property type="project" value="TreeGrafter"/>
</dbReference>
<dbReference type="FunFam" id="3.90.930.12:FF:000001">
    <property type="entry name" value="50S ribosomal protein L6"/>
    <property type="match status" value="1"/>
</dbReference>
<dbReference type="FunFam" id="3.90.930.12:FF:000010">
    <property type="entry name" value="50S ribosomal protein L6"/>
    <property type="match status" value="1"/>
</dbReference>
<dbReference type="Gene3D" id="3.90.930.12">
    <property type="entry name" value="Ribosomal protein L6, alpha-beta domain"/>
    <property type="match status" value="2"/>
</dbReference>
<dbReference type="HAMAP" id="MF_01365_B">
    <property type="entry name" value="Ribosomal_uL6_B"/>
    <property type="match status" value="1"/>
</dbReference>
<dbReference type="InterPro" id="IPR000702">
    <property type="entry name" value="Ribosomal_uL6-like"/>
</dbReference>
<dbReference type="InterPro" id="IPR036789">
    <property type="entry name" value="Ribosomal_uL6-like_a/b-dom_sf"/>
</dbReference>
<dbReference type="InterPro" id="IPR020040">
    <property type="entry name" value="Ribosomal_uL6_a/b-dom"/>
</dbReference>
<dbReference type="InterPro" id="IPR019906">
    <property type="entry name" value="Ribosomal_uL6_bac-type"/>
</dbReference>
<dbReference type="InterPro" id="IPR002358">
    <property type="entry name" value="Ribosomal_uL6_CS"/>
</dbReference>
<dbReference type="NCBIfam" id="TIGR03654">
    <property type="entry name" value="L6_bact"/>
    <property type="match status" value="1"/>
</dbReference>
<dbReference type="PANTHER" id="PTHR11655">
    <property type="entry name" value="60S/50S RIBOSOMAL PROTEIN L6/L9"/>
    <property type="match status" value="1"/>
</dbReference>
<dbReference type="PANTHER" id="PTHR11655:SF14">
    <property type="entry name" value="LARGE RIBOSOMAL SUBUNIT PROTEIN UL6M"/>
    <property type="match status" value="1"/>
</dbReference>
<dbReference type="Pfam" id="PF00347">
    <property type="entry name" value="Ribosomal_L6"/>
    <property type="match status" value="1"/>
</dbReference>
<dbReference type="PIRSF" id="PIRSF002162">
    <property type="entry name" value="Ribosomal_L6"/>
    <property type="match status" value="1"/>
</dbReference>
<dbReference type="PRINTS" id="PR00059">
    <property type="entry name" value="RIBOSOMALL6"/>
</dbReference>
<dbReference type="SUPFAM" id="SSF56053">
    <property type="entry name" value="Ribosomal protein L6"/>
    <property type="match status" value="2"/>
</dbReference>
<dbReference type="PROSITE" id="PS00525">
    <property type="entry name" value="RIBOSOMAL_L6_1"/>
    <property type="match status" value="1"/>
</dbReference>
<organism>
    <name type="scientific">Helicobacter pylori (strain P12)</name>
    <dbReference type="NCBI Taxonomy" id="570508"/>
    <lineage>
        <taxon>Bacteria</taxon>
        <taxon>Pseudomonadati</taxon>
        <taxon>Campylobacterota</taxon>
        <taxon>Epsilonproteobacteria</taxon>
        <taxon>Campylobacterales</taxon>
        <taxon>Helicobacteraceae</taxon>
        <taxon>Helicobacter</taxon>
    </lineage>
</organism>
<reference key="1">
    <citation type="submission" date="2008-10" db="EMBL/GenBank/DDBJ databases">
        <title>The complete genome sequence of Helicobacter pylori strain P12.</title>
        <authorList>
            <person name="Fischer W."/>
            <person name="Windhager L."/>
            <person name="Karnholz A."/>
            <person name="Zeiller M."/>
            <person name="Zimmer R."/>
            <person name="Haas R."/>
        </authorList>
    </citation>
    <scope>NUCLEOTIDE SEQUENCE [LARGE SCALE GENOMIC DNA]</scope>
    <source>
        <strain>P12</strain>
    </source>
</reference>
<protein>
    <recommendedName>
        <fullName evidence="1">Large ribosomal subunit protein uL6</fullName>
    </recommendedName>
    <alternativeName>
        <fullName evidence="2">50S ribosomal protein L6</fullName>
    </alternativeName>
</protein>
<accession>B6JNE3</accession>
<feature type="chain" id="PRO_1000143998" description="Large ribosomal subunit protein uL6">
    <location>
        <begin position="1"/>
        <end position="178"/>
    </location>
</feature>
<proteinExistence type="inferred from homology"/>
<comment type="function">
    <text evidence="1">This protein binds to the 23S rRNA, and is important in its secondary structure. It is located near the subunit interface in the base of the L7/L12 stalk, and near the tRNA binding site of the peptidyltransferase center.</text>
</comment>
<comment type="subunit">
    <text evidence="1">Part of the 50S ribosomal subunit.</text>
</comment>
<comment type="similarity">
    <text evidence="1">Belongs to the universal ribosomal protein uL6 family.</text>
</comment>
<gene>
    <name evidence="1" type="primary">rplF</name>
    <name type="ordered locus">HPP12_1269</name>
</gene>
<evidence type="ECO:0000255" key="1">
    <source>
        <dbReference type="HAMAP-Rule" id="MF_01365"/>
    </source>
</evidence>
<evidence type="ECO:0000305" key="2"/>